<accession>A1VQJ1</accession>
<sequence length="350" mass="36813">MSLLPYALARPFLFGLDPETAHELTMASLARTQGTLLSAAYCSSKVSDPIELAGLKFSNRVGLAAGLDKNARCIDGLAAMGFGFVEVGTVTPKAQPGNPKPRMFRLPEANALINRLGFNNDGLDAFLANVRKSAVRQKNAKNALLLGLNIGKNAATPIENAVDDYLICLDGVYPHADYVTVNISSPNTKNLRALQSDEALDALLGRIAERRETLAGRHGKRVPIFVKIAPDLDDAQVAVIATTLKRHAMDGVVATNTTLSRDAVKGLRHAEEAGGLSGAPVLEASNRVIGQLRAALGKGFPIIGVGGVMSGLDAVSKIKAGADVVQIYTGLIYKGPALVAEAANSIKNSR</sequence>
<evidence type="ECO:0000255" key="1">
    <source>
        <dbReference type="HAMAP-Rule" id="MF_00225"/>
    </source>
</evidence>
<feature type="chain" id="PRO_1000024195" description="Dihydroorotate dehydrogenase (quinone)">
    <location>
        <begin position="1"/>
        <end position="350"/>
    </location>
</feature>
<feature type="active site" description="Nucleophile" evidence="1">
    <location>
        <position position="185"/>
    </location>
</feature>
<feature type="binding site" evidence="1">
    <location>
        <begin position="65"/>
        <end position="69"/>
    </location>
    <ligand>
        <name>FMN</name>
        <dbReference type="ChEBI" id="CHEBI:58210"/>
    </ligand>
</feature>
<feature type="binding site" evidence="1">
    <location>
        <position position="69"/>
    </location>
    <ligand>
        <name>substrate</name>
    </ligand>
</feature>
<feature type="binding site" evidence="1">
    <location>
        <position position="89"/>
    </location>
    <ligand>
        <name>FMN</name>
        <dbReference type="ChEBI" id="CHEBI:58210"/>
    </ligand>
</feature>
<feature type="binding site" evidence="1">
    <location>
        <begin position="114"/>
        <end position="118"/>
    </location>
    <ligand>
        <name>substrate</name>
    </ligand>
</feature>
<feature type="binding site" evidence="1">
    <location>
        <position position="149"/>
    </location>
    <ligand>
        <name>FMN</name>
        <dbReference type="ChEBI" id="CHEBI:58210"/>
    </ligand>
</feature>
<feature type="binding site" evidence="1">
    <location>
        <position position="182"/>
    </location>
    <ligand>
        <name>FMN</name>
        <dbReference type="ChEBI" id="CHEBI:58210"/>
    </ligand>
</feature>
<feature type="binding site" evidence="1">
    <location>
        <position position="182"/>
    </location>
    <ligand>
        <name>substrate</name>
    </ligand>
</feature>
<feature type="binding site" evidence="1">
    <location>
        <position position="187"/>
    </location>
    <ligand>
        <name>substrate</name>
    </ligand>
</feature>
<feature type="binding site" evidence="1">
    <location>
        <position position="227"/>
    </location>
    <ligand>
        <name>FMN</name>
        <dbReference type="ChEBI" id="CHEBI:58210"/>
    </ligand>
</feature>
<feature type="binding site" evidence="1">
    <location>
        <position position="255"/>
    </location>
    <ligand>
        <name>FMN</name>
        <dbReference type="ChEBI" id="CHEBI:58210"/>
    </ligand>
</feature>
<feature type="binding site" evidence="1">
    <location>
        <begin position="256"/>
        <end position="257"/>
    </location>
    <ligand>
        <name>substrate</name>
    </ligand>
</feature>
<feature type="binding site" evidence="1">
    <location>
        <position position="278"/>
    </location>
    <ligand>
        <name>FMN</name>
        <dbReference type="ChEBI" id="CHEBI:58210"/>
    </ligand>
</feature>
<feature type="binding site" evidence="1">
    <location>
        <position position="307"/>
    </location>
    <ligand>
        <name>FMN</name>
        <dbReference type="ChEBI" id="CHEBI:58210"/>
    </ligand>
</feature>
<feature type="binding site" evidence="1">
    <location>
        <begin position="328"/>
        <end position="329"/>
    </location>
    <ligand>
        <name>FMN</name>
        <dbReference type="ChEBI" id="CHEBI:58210"/>
    </ligand>
</feature>
<gene>
    <name evidence="1" type="primary">pyrD</name>
    <name type="ordered locus">Pnap_2617</name>
</gene>
<name>PYRD_POLNA</name>
<comment type="function">
    <text evidence="1">Catalyzes the conversion of dihydroorotate to orotate with quinone as electron acceptor.</text>
</comment>
<comment type="catalytic activity">
    <reaction evidence="1">
        <text>(S)-dihydroorotate + a quinone = orotate + a quinol</text>
        <dbReference type="Rhea" id="RHEA:30187"/>
        <dbReference type="ChEBI" id="CHEBI:24646"/>
        <dbReference type="ChEBI" id="CHEBI:30839"/>
        <dbReference type="ChEBI" id="CHEBI:30864"/>
        <dbReference type="ChEBI" id="CHEBI:132124"/>
        <dbReference type="EC" id="1.3.5.2"/>
    </reaction>
</comment>
<comment type="cofactor">
    <cofactor evidence="1">
        <name>FMN</name>
        <dbReference type="ChEBI" id="CHEBI:58210"/>
    </cofactor>
    <text evidence="1">Binds 1 FMN per subunit.</text>
</comment>
<comment type="pathway">
    <text evidence="1">Pyrimidine metabolism; UMP biosynthesis via de novo pathway; orotate from (S)-dihydroorotate (quinone route): step 1/1.</text>
</comment>
<comment type="subunit">
    <text evidence="1">Monomer.</text>
</comment>
<comment type="subcellular location">
    <subcellularLocation>
        <location evidence="1">Cell membrane</location>
        <topology evidence="1">Peripheral membrane protein</topology>
    </subcellularLocation>
</comment>
<comment type="similarity">
    <text evidence="1">Belongs to the dihydroorotate dehydrogenase family. Type 2 subfamily.</text>
</comment>
<proteinExistence type="inferred from homology"/>
<keyword id="KW-1003">Cell membrane</keyword>
<keyword id="KW-0285">Flavoprotein</keyword>
<keyword id="KW-0288">FMN</keyword>
<keyword id="KW-0472">Membrane</keyword>
<keyword id="KW-0560">Oxidoreductase</keyword>
<keyword id="KW-0665">Pyrimidine biosynthesis</keyword>
<keyword id="KW-1185">Reference proteome</keyword>
<dbReference type="EC" id="1.3.5.2" evidence="1"/>
<dbReference type="EMBL" id="CP000529">
    <property type="protein sequence ID" value="ABM37919.1"/>
    <property type="molecule type" value="Genomic_DNA"/>
</dbReference>
<dbReference type="RefSeq" id="WP_011801996.1">
    <property type="nucleotide sequence ID" value="NC_008781.1"/>
</dbReference>
<dbReference type="SMR" id="A1VQJ1"/>
<dbReference type="STRING" id="365044.Pnap_2617"/>
<dbReference type="KEGG" id="pna:Pnap_2617"/>
<dbReference type="eggNOG" id="COG0167">
    <property type="taxonomic scope" value="Bacteria"/>
</dbReference>
<dbReference type="HOGENOM" id="CLU_013640_2_0_4"/>
<dbReference type="OrthoDB" id="9802377at2"/>
<dbReference type="UniPathway" id="UPA00070">
    <property type="reaction ID" value="UER00946"/>
</dbReference>
<dbReference type="Proteomes" id="UP000000644">
    <property type="component" value="Chromosome"/>
</dbReference>
<dbReference type="GO" id="GO:0005737">
    <property type="term" value="C:cytoplasm"/>
    <property type="evidence" value="ECO:0007669"/>
    <property type="project" value="InterPro"/>
</dbReference>
<dbReference type="GO" id="GO:0005886">
    <property type="term" value="C:plasma membrane"/>
    <property type="evidence" value="ECO:0007669"/>
    <property type="project" value="UniProtKB-SubCell"/>
</dbReference>
<dbReference type="GO" id="GO:0106430">
    <property type="term" value="F:dihydroorotate dehydrogenase (quinone) activity"/>
    <property type="evidence" value="ECO:0007669"/>
    <property type="project" value="UniProtKB-EC"/>
</dbReference>
<dbReference type="GO" id="GO:0006207">
    <property type="term" value="P:'de novo' pyrimidine nucleobase biosynthetic process"/>
    <property type="evidence" value="ECO:0007669"/>
    <property type="project" value="InterPro"/>
</dbReference>
<dbReference type="GO" id="GO:0044205">
    <property type="term" value="P:'de novo' UMP biosynthetic process"/>
    <property type="evidence" value="ECO:0007669"/>
    <property type="project" value="UniProtKB-UniRule"/>
</dbReference>
<dbReference type="CDD" id="cd04738">
    <property type="entry name" value="DHOD_2_like"/>
    <property type="match status" value="1"/>
</dbReference>
<dbReference type="Gene3D" id="3.20.20.70">
    <property type="entry name" value="Aldolase class I"/>
    <property type="match status" value="1"/>
</dbReference>
<dbReference type="HAMAP" id="MF_00225">
    <property type="entry name" value="DHO_dh_type2"/>
    <property type="match status" value="1"/>
</dbReference>
<dbReference type="InterPro" id="IPR013785">
    <property type="entry name" value="Aldolase_TIM"/>
</dbReference>
<dbReference type="InterPro" id="IPR050074">
    <property type="entry name" value="DHO_dehydrogenase"/>
</dbReference>
<dbReference type="InterPro" id="IPR012135">
    <property type="entry name" value="Dihydroorotate_DH_1_2"/>
</dbReference>
<dbReference type="InterPro" id="IPR005719">
    <property type="entry name" value="Dihydroorotate_DH_2"/>
</dbReference>
<dbReference type="InterPro" id="IPR005720">
    <property type="entry name" value="Dihydroorotate_DH_cat"/>
</dbReference>
<dbReference type="InterPro" id="IPR001295">
    <property type="entry name" value="Dihydroorotate_DH_CS"/>
</dbReference>
<dbReference type="NCBIfam" id="NF003644">
    <property type="entry name" value="PRK05286.1-1"/>
    <property type="match status" value="1"/>
</dbReference>
<dbReference type="NCBIfam" id="NF003645">
    <property type="entry name" value="PRK05286.1-2"/>
    <property type="match status" value="1"/>
</dbReference>
<dbReference type="NCBIfam" id="NF003646">
    <property type="entry name" value="PRK05286.1-4"/>
    <property type="match status" value="1"/>
</dbReference>
<dbReference type="NCBIfam" id="NF003652">
    <property type="entry name" value="PRK05286.2-5"/>
    <property type="match status" value="1"/>
</dbReference>
<dbReference type="NCBIfam" id="TIGR01036">
    <property type="entry name" value="pyrD_sub2"/>
    <property type="match status" value="1"/>
</dbReference>
<dbReference type="PANTHER" id="PTHR48109:SF4">
    <property type="entry name" value="DIHYDROOROTATE DEHYDROGENASE (QUINONE), MITOCHONDRIAL"/>
    <property type="match status" value="1"/>
</dbReference>
<dbReference type="PANTHER" id="PTHR48109">
    <property type="entry name" value="DIHYDROOROTATE DEHYDROGENASE (QUINONE), MITOCHONDRIAL-RELATED"/>
    <property type="match status" value="1"/>
</dbReference>
<dbReference type="Pfam" id="PF01180">
    <property type="entry name" value="DHO_dh"/>
    <property type="match status" value="1"/>
</dbReference>
<dbReference type="PIRSF" id="PIRSF000164">
    <property type="entry name" value="DHO_oxidase"/>
    <property type="match status" value="1"/>
</dbReference>
<dbReference type="SUPFAM" id="SSF51395">
    <property type="entry name" value="FMN-linked oxidoreductases"/>
    <property type="match status" value="1"/>
</dbReference>
<dbReference type="PROSITE" id="PS00911">
    <property type="entry name" value="DHODEHASE_1"/>
    <property type="match status" value="1"/>
</dbReference>
<dbReference type="PROSITE" id="PS00912">
    <property type="entry name" value="DHODEHASE_2"/>
    <property type="match status" value="1"/>
</dbReference>
<protein>
    <recommendedName>
        <fullName evidence="1">Dihydroorotate dehydrogenase (quinone)</fullName>
        <ecNumber evidence="1">1.3.5.2</ecNumber>
    </recommendedName>
    <alternativeName>
        <fullName evidence="1">DHOdehase</fullName>
        <shortName evidence="1">DHOD</shortName>
        <shortName evidence="1">DHODase</shortName>
    </alternativeName>
    <alternativeName>
        <fullName evidence="1">Dihydroorotate oxidase</fullName>
    </alternativeName>
</protein>
<organism>
    <name type="scientific">Polaromonas naphthalenivorans (strain CJ2)</name>
    <dbReference type="NCBI Taxonomy" id="365044"/>
    <lineage>
        <taxon>Bacteria</taxon>
        <taxon>Pseudomonadati</taxon>
        <taxon>Pseudomonadota</taxon>
        <taxon>Betaproteobacteria</taxon>
        <taxon>Burkholderiales</taxon>
        <taxon>Comamonadaceae</taxon>
        <taxon>Polaromonas</taxon>
    </lineage>
</organism>
<reference key="1">
    <citation type="journal article" date="2009" name="Environ. Microbiol.">
        <title>The genome of Polaromonas naphthalenivorans strain CJ2, isolated from coal tar-contaminated sediment, reveals physiological and metabolic versatility and evolution through extensive horizontal gene transfer.</title>
        <authorList>
            <person name="Yagi J.M."/>
            <person name="Sims D."/>
            <person name="Brettin T."/>
            <person name="Bruce D."/>
            <person name="Madsen E.L."/>
        </authorList>
    </citation>
    <scope>NUCLEOTIDE SEQUENCE [LARGE SCALE GENOMIC DNA]</scope>
    <source>
        <strain>CJ2</strain>
    </source>
</reference>